<dbReference type="EC" id="1.1.1.103" evidence="1"/>
<dbReference type="EMBL" id="CP000647">
    <property type="protein sequence ID" value="ABR79346.1"/>
    <property type="molecule type" value="Genomic_DNA"/>
</dbReference>
<dbReference type="RefSeq" id="WP_002922461.1">
    <property type="nucleotide sequence ID" value="NC_009648.1"/>
</dbReference>
<dbReference type="SMR" id="A6TFL2"/>
<dbReference type="STRING" id="272620.KPN_03961"/>
<dbReference type="jPOST" id="A6TFL2"/>
<dbReference type="PaxDb" id="272620-KPN_03961"/>
<dbReference type="EnsemblBacteria" id="ABR79346">
    <property type="protein sequence ID" value="ABR79346"/>
    <property type="gene ID" value="KPN_03961"/>
</dbReference>
<dbReference type="KEGG" id="kpn:KPN_03961"/>
<dbReference type="HOGENOM" id="CLU_026673_11_0_6"/>
<dbReference type="UniPathway" id="UPA00046">
    <property type="reaction ID" value="UER00505"/>
</dbReference>
<dbReference type="Proteomes" id="UP000000265">
    <property type="component" value="Chromosome"/>
</dbReference>
<dbReference type="GO" id="GO:0005737">
    <property type="term" value="C:cytoplasm"/>
    <property type="evidence" value="ECO:0007669"/>
    <property type="project" value="UniProtKB-SubCell"/>
</dbReference>
<dbReference type="GO" id="GO:0008743">
    <property type="term" value="F:L-threonine 3-dehydrogenase activity"/>
    <property type="evidence" value="ECO:0007669"/>
    <property type="project" value="UniProtKB-UniRule"/>
</dbReference>
<dbReference type="GO" id="GO:0008270">
    <property type="term" value="F:zinc ion binding"/>
    <property type="evidence" value="ECO:0007669"/>
    <property type="project" value="UniProtKB-UniRule"/>
</dbReference>
<dbReference type="GO" id="GO:0019518">
    <property type="term" value="P:L-threonine catabolic process to glycine"/>
    <property type="evidence" value="ECO:0007669"/>
    <property type="project" value="UniProtKB-UniPathway"/>
</dbReference>
<dbReference type="FunFam" id="3.40.50.720:FF:000059">
    <property type="entry name" value="L-threonine 3-dehydrogenase"/>
    <property type="match status" value="1"/>
</dbReference>
<dbReference type="Gene3D" id="3.90.180.10">
    <property type="entry name" value="Medium-chain alcohol dehydrogenases, catalytic domain"/>
    <property type="match status" value="1"/>
</dbReference>
<dbReference type="Gene3D" id="3.40.50.720">
    <property type="entry name" value="NAD(P)-binding Rossmann-like Domain"/>
    <property type="match status" value="1"/>
</dbReference>
<dbReference type="HAMAP" id="MF_00627">
    <property type="entry name" value="Thr_dehydrog"/>
    <property type="match status" value="1"/>
</dbReference>
<dbReference type="InterPro" id="IPR013149">
    <property type="entry name" value="ADH-like_C"/>
</dbReference>
<dbReference type="InterPro" id="IPR013154">
    <property type="entry name" value="ADH-like_N"/>
</dbReference>
<dbReference type="InterPro" id="IPR002328">
    <property type="entry name" value="ADH_Zn_CS"/>
</dbReference>
<dbReference type="InterPro" id="IPR011032">
    <property type="entry name" value="GroES-like_sf"/>
</dbReference>
<dbReference type="InterPro" id="IPR004627">
    <property type="entry name" value="L-Threonine_3-DHase"/>
</dbReference>
<dbReference type="InterPro" id="IPR036291">
    <property type="entry name" value="NAD(P)-bd_dom_sf"/>
</dbReference>
<dbReference type="InterPro" id="IPR020843">
    <property type="entry name" value="PKS_ER"/>
</dbReference>
<dbReference type="InterPro" id="IPR050129">
    <property type="entry name" value="Zn_alcohol_dh"/>
</dbReference>
<dbReference type="NCBIfam" id="NF003808">
    <property type="entry name" value="PRK05396.1"/>
    <property type="match status" value="1"/>
</dbReference>
<dbReference type="NCBIfam" id="TIGR00692">
    <property type="entry name" value="tdh"/>
    <property type="match status" value="1"/>
</dbReference>
<dbReference type="PANTHER" id="PTHR43401">
    <property type="entry name" value="L-THREONINE 3-DEHYDROGENASE"/>
    <property type="match status" value="1"/>
</dbReference>
<dbReference type="PANTHER" id="PTHR43401:SF2">
    <property type="entry name" value="L-THREONINE 3-DEHYDROGENASE"/>
    <property type="match status" value="1"/>
</dbReference>
<dbReference type="Pfam" id="PF08240">
    <property type="entry name" value="ADH_N"/>
    <property type="match status" value="1"/>
</dbReference>
<dbReference type="Pfam" id="PF00107">
    <property type="entry name" value="ADH_zinc_N"/>
    <property type="match status" value="1"/>
</dbReference>
<dbReference type="SMART" id="SM00829">
    <property type="entry name" value="PKS_ER"/>
    <property type="match status" value="1"/>
</dbReference>
<dbReference type="SUPFAM" id="SSF50129">
    <property type="entry name" value="GroES-like"/>
    <property type="match status" value="1"/>
</dbReference>
<dbReference type="SUPFAM" id="SSF51735">
    <property type="entry name" value="NAD(P)-binding Rossmann-fold domains"/>
    <property type="match status" value="1"/>
</dbReference>
<dbReference type="PROSITE" id="PS00059">
    <property type="entry name" value="ADH_ZINC"/>
    <property type="match status" value="1"/>
</dbReference>
<comment type="function">
    <text evidence="1">Catalyzes the NAD(+)-dependent oxidation of L-threonine to 2-amino-3-ketobutyrate.</text>
</comment>
<comment type="catalytic activity">
    <reaction evidence="1">
        <text>L-threonine + NAD(+) = (2S)-2-amino-3-oxobutanoate + NADH + H(+)</text>
        <dbReference type="Rhea" id="RHEA:13161"/>
        <dbReference type="ChEBI" id="CHEBI:15378"/>
        <dbReference type="ChEBI" id="CHEBI:57540"/>
        <dbReference type="ChEBI" id="CHEBI:57926"/>
        <dbReference type="ChEBI" id="CHEBI:57945"/>
        <dbReference type="ChEBI" id="CHEBI:78948"/>
        <dbReference type="EC" id="1.1.1.103"/>
    </reaction>
</comment>
<comment type="cofactor">
    <cofactor evidence="1">
        <name>Zn(2+)</name>
        <dbReference type="ChEBI" id="CHEBI:29105"/>
    </cofactor>
    <text evidence="1">Binds 2 Zn(2+) ions per subunit.</text>
</comment>
<comment type="pathway">
    <text evidence="1">Amino-acid degradation; L-threonine degradation via oxydo-reductase pathway; glycine from L-threonine: step 1/2.</text>
</comment>
<comment type="subunit">
    <text evidence="1">Homotetramer.</text>
</comment>
<comment type="subcellular location">
    <subcellularLocation>
        <location evidence="1">Cytoplasm</location>
    </subcellularLocation>
</comment>
<comment type="similarity">
    <text evidence="1">Belongs to the zinc-containing alcohol dehydrogenase family.</text>
</comment>
<organism>
    <name type="scientific">Klebsiella pneumoniae subsp. pneumoniae (strain ATCC 700721 / MGH 78578)</name>
    <dbReference type="NCBI Taxonomy" id="272620"/>
    <lineage>
        <taxon>Bacteria</taxon>
        <taxon>Pseudomonadati</taxon>
        <taxon>Pseudomonadota</taxon>
        <taxon>Gammaproteobacteria</taxon>
        <taxon>Enterobacterales</taxon>
        <taxon>Enterobacteriaceae</taxon>
        <taxon>Klebsiella/Raoultella group</taxon>
        <taxon>Klebsiella</taxon>
        <taxon>Klebsiella pneumoniae complex</taxon>
    </lineage>
</organism>
<proteinExistence type="inferred from homology"/>
<evidence type="ECO:0000255" key="1">
    <source>
        <dbReference type="HAMAP-Rule" id="MF_00627"/>
    </source>
</evidence>
<keyword id="KW-0963">Cytoplasm</keyword>
<keyword id="KW-0479">Metal-binding</keyword>
<keyword id="KW-0520">NAD</keyword>
<keyword id="KW-0560">Oxidoreductase</keyword>
<keyword id="KW-0862">Zinc</keyword>
<protein>
    <recommendedName>
        <fullName evidence="1">L-threonine 3-dehydrogenase</fullName>
        <shortName evidence="1">TDH</shortName>
        <ecNumber evidence="1">1.1.1.103</ecNumber>
    </recommendedName>
</protein>
<name>TDH_KLEP7</name>
<sequence length="341" mass="37227">MKALSKLKAEEGIWMTDVPEPEVGHNDLLIKIRKTAICGTDVHIYNWDEWSQKTIPVPMVVGHEYVGEVVGIGQEVRGFKIGDRVSGEGHITCGHCRNCRAGRTHLCRNTIGVGVNRPGCFAEYLVIPAFNAFKIPDNISDDLASIFDPFGNAVHTALSFDLVGEDVLVSGAGPIGVMAAAVAKHVGARNVVITDVNEYRLELARKMGVTRAVNVAKENLNDVMAELGMTEGFDVGLEMSGAPPAFRSMLDTMNHGGRIAMLGIPPSDMSIDWTKVIFKGLFIKGIYGREMFETWYKMAALIQSGLDLSPIITHRFGIDDFQKGFDAMRSGQSGKVVLSWD</sequence>
<reference key="1">
    <citation type="submission" date="2006-09" db="EMBL/GenBank/DDBJ databases">
        <authorList>
            <consortium name="The Klebsiella pneumonia Genome Sequencing Project"/>
            <person name="McClelland M."/>
            <person name="Sanderson E.K."/>
            <person name="Spieth J."/>
            <person name="Clifton W.S."/>
            <person name="Latreille P."/>
            <person name="Sabo A."/>
            <person name="Pepin K."/>
            <person name="Bhonagiri V."/>
            <person name="Porwollik S."/>
            <person name="Ali J."/>
            <person name="Wilson R.K."/>
        </authorList>
    </citation>
    <scope>NUCLEOTIDE SEQUENCE [LARGE SCALE GENOMIC DNA]</scope>
    <source>
        <strain>ATCC 700721 / MGH 78578</strain>
    </source>
</reference>
<accession>A6TFL2</accession>
<gene>
    <name evidence="1" type="primary">tdh</name>
    <name type="ordered locus">KPN78578_39220</name>
    <name type="ORF">KPN_03961</name>
</gene>
<feature type="chain" id="PRO_1000051642" description="L-threonine 3-dehydrogenase">
    <location>
        <begin position="1"/>
        <end position="341"/>
    </location>
</feature>
<feature type="active site" description="Charge relay system" evidence="1">
    <location>
        <position position="40"/>
    </location>
</feature>
<feature type="active site" description="Charge relay system" evidence="1">
    <location>
        <position position="43"/>
    </location>
</feature>
<feature type="binding site" evidence="1">
    <location>
        <position position="38"/>
    </location>
    <ligand>
        <name>Zn(2+)</name>
        <dbReference type="ChEBI" id="CHEBI:29105"/>
        <label>1</label>
        <note>catalytic</note>
    </ligand>
</feature>
<feature type="binding site" evidence="1">
    <location>
        <position position="63"/>
    </location>
    <ligand>
        <name>Zn(2+)</name>
        <dbReference type="ChEBI" id="CHEBI:29105"/>
        <label>1</label>
        <note>catalytic</note>
    </ligand>
</feature>
<feature type="binding site" evidence="1">
    <location>
        <position position="64"/>
    </location>
    <ligand>
        <name>Zn(2+)</name>
        <dbReference type="ChEBI" id="CHEBI:29105"/>
        <label>1</label>
        <note>catalytic</note>
    </ligand>
</feature>
<feature type="binding site" evidence="1">
    <location>
        <position position="93"/>
    </location>
    <ligand>
        <name>Zn(2+)</name>
        <dbReference type="ChEBI" id="CHEBI:29105"/>
        <label>2</label>
    </ligand>
</feature>
<feature type="binding site" evidence="1">
    <location>
        <position position="96"/>
    </location>
    <ligand>
        <name>Zn(2+)</name>
        <dbReference type="ChEBI" id="CHEBI:29105"/>
        <label>2</label>
    </ligand>
</feature>
<feature type="binding site" evidence="1">
    <location>
        <position position="99"/>
    </location>
    <ligand>
        <name>Zn(2+)</name>
        <dbReference type="ChEBI" id="CHEBI:29105"/>
        <label>2</label>
    </ligand>
</feature>
<feature type="binding site" evidence="1">
    <location>
        <position position="107"/>
    </location>
    <ligand>
        <name>Zn(2+)</name>
        <dbReference type="ChEBI" id="CHEBI:29105"/>
        <label>2</label>
    </ligand>
</feature>
<feature type="binding site" evidence="1">
    <location>
        <position position="175"/>
    </location>
    <ligand>
        <name>NAD(+)</name>
        <dbReference type="ChEBI" id="CHEBI:57540"/>
    </ligand>
</feature>
<feature type="binding site" evidence="1">
    <location>
        <position position="195"/>
    </location>
    <ligand>
        <name>NAD(+)</name>
        <dbReference type="ChEBI" id="CHEBI:57540"/>
    </ligand>
</feature>
<feature type="binding site" evidence="1">
    <location>
        <position position="200"/>
    </location>
    <ligand>
        <name>NAD(+)</name>
        <dbReference type="ChEBI" id="CHEBI:57540"/>
    </ligand>
</feature>
<feature type="binding site" evidence="1">
    <location>
        <begin position="262"/>
        <end position="264"/>
    </location>
    <ligand>
        <name>NAD(+)</name>
        <dbReference type="ChEBI" id="CHEBI:57540"/>
    </ligand>
</feature>
<feature type="binding site" evidence="1">
    <location>
        <begin position="286"/>
        <end position="287"/>
    </location>
    <ligand>
        <name>NAD(+)</name>
        <dbReference type="ChEBI" id="CHEBI:57540"/>
    </ligand>
</feature>
<feature type="site" description="Important for catalytic activity for the proton relay mechanism but does not participate directly in the coordination of zinc atom" evidence="1">
    <location>
        <position position="148"/>
    </location>
</feature>